<reference key="1">
    <citation type="submission" date="2005-08" db="EMBL/GenBank/DDBJ databases">
        <authorList>
            <consortium name="NIH - Mammalian Gene Collection (MGC) project"/>
        </authorList>
    </citation>
    <scope>NUCLEOTIDE SEQUENCE [LARGE SCALE MRNA]</scope>
    <source>
        <strain>Crossbred X Angus</strain>
        <tissue>Ileum</tissue>
    </source>
</reference>
<proteinExistence type="evidence at transcript level"/>
<sequence length="555" mass="61786">MAATGAAATDLEVVRGKRAALFFATVVIVLGLPLWWKTTETYRAPLPYSQISGLNSLKLRLMVPVTVVFTQESVPLDDQEKLPFTVVHEREIPLKYKLKIKCRFQKAYRRALDHEEAALSLGNIQEAEAMLAEPSEQAEGSLTVYVISERCSLLPQDMMSYIGPKRMAVVRGITHREAFNIIGRRIIQVVQAMSLTEDVLAAALADHLPEDKWSSDKRRPLKSSLGYEITFSLLNPDPKSHDVHWDIEGAVRRYVQPFLSALSAAGNFSVDSQILYYAVLGVNPRFDSASSSYYLAAHSLPHVINPVESRLGSSAASLYPVLNFLLYVPELAHSPLYIQDKDGAPVATNAFHSPRWGGIMVYNVDPKAYNGSQLPVRVEVDMMRVMEVFLAQLRLLFGIAQPQLPPKCLFFGPKSEGIMTWELDRLLWARSVENLATATTTLTSLAQLLGKISNIVIKDDVASEVYRAVAAVQKAAEELSSGHLASAFAASQEAVTSSERAFFDPSLLHLLYFPDDQKFAIYIPLFLPMAVPILLSLFKIFLETRKSWKKPEKTD</sequence>
<feature type="initiator methionine" description="Removed" evidence="1">
    <location>
        <position position="1"/>
    </location>
</feature>
<feature type="chain" id="PRO_0000253474" description="GPI-anchor transamidase component PIGS">
    <location>
        <begin position="2"/>
        <end position="555"/>
    </location>
</feature>
<feature type="topological domain" description="Cytoplasmic" evidence="3">
    <location>
        <begin position="2"/>
        <end position="18"/>
    </location>
</feature>
<feature type="transmembrane region" description="Helical" evidence="1">
    <location>
        <begin position="19"/>
        <end position="39"/>
    </location>
</feature>
<feature type="topological domain" description="Lumenal" evidence="3">
    <location>
        <begin position="40"/>
        <end position="517"/>
    </location>
</feature>
<feature type="transmembrane region" description="Helical" evidence="1">
    <location>
        <begin position="518"/>
        <end position="532"/>
    </location>
</feature>
<feature type="topological domain" description="Cytoplasmic" evidence="3">
    <location>
        <begin position="533"/>
        <end position="555"/>
    </location>
</feature>
<feature type="binding site" evidence="1">
    <location>
        <position position="15"/>
    </location>
    <ligand>
        <name>a cardiolipin</name>
        <dbReference type="ChEBI" id="CHEBI:62237"/>
    </ligand>
</feature>
<feature type="binding site" evidence="1">
    <location>
        <position position="18"/>
    </location>
    <ligand>
        <name>a cardiolipin</name>
        <dbReference type="ChEBI" id="CHEBI:62237"/>
    </ligand>
</feature>
<feature type="glycosylation site" description="N-linked (GlcNAc...) asparagine" evidence="2">
    <location>
        <position position="267"/>
    </location>
</feature>
<feature type="glycosylation site" description="N-linked (GlcNAc...) asparagine" evidence="2">
    <location>
        <position position="370"/>
    </location>
</feature>
<protein>
    <recommendedName>
        <fullName evidence="1">GPI-anchor transamidase component PIGS</fullName>
    </recommendedName>
    <alternativeName>
        <fullName>Phosphatidylinositol-glycan biosynthesis class S protein</fullName>
    </alternativeName>
</protein>
<evidence type="ECO:0000250" key="1">
    <source>
        <dbReference type="UniProtKB" id="Q96S52"/>
    </source>
</evidence>
<evidence type="ECO:0000255" key="2"/>
<evidence type="ECO:0000305" key="3"/>
<keyword id="KW-0256">Endoplasmic reticulum</keyword>
<keyword id="KW-0325">Glycoprotein</keyword>
<keyword id="KW-0337">GPI-anchor biosynthesis</keyword>
<keyword id="KW-0472">Membrane</keyword>
<keyword id="KW-1185">Reference proteome</keyword>
<keyword id="KW-0812">Transmembrane</keyword>
<keyword id="KW-1133">Transmembrane helix</keyword>
<name>PIGS_BOVIN</name>
<organism>
    <name type="scientific">Bos taurus</name>
    <name type="common">Bovine</name>
    <dbReference type="NCBI Taxonomy" id="9913"/>
    <lineage>
        <taxon>Eukaryota</taxon>
        <taxon>Metazoa</taxon>
        <taxon>Chordata</taxon>
        <taxon>Craniata</taxon>
        <taxon>Vertebrata</taxon>
        <taxon>Euteleostomi</taxon>
        <taxon>Mammalia</taxon>
        <taxon>Eutheria</taxon>
        <taxon>Laurasiatheria</taxon>
        <taxon>Artiodactyla</taxon>
        <taxon>Ruminantia</taxon>
        <taxon>Pecora</taxon>
        <taxon>Bovidae</taxon>
        <taxon>Bovinae</taxon>
        <taxon>Bos</taxon>
    </lineage>
</organism>
<dbReference type="EMBL" id="BC102800">
    <property type="protein sequence ID" value="AAI02801.1"/>
    <property type="molecule type" value="mRNA"/>
</dbReference>
<dbReference type="RefSeq" id="NP_001029388.1">
    <property type="nucleotide sequence ID" value="NM_001034216.1"/>
</dbReference>
<dbReference type="SMR" id="Q3SZL5"/>
<dbReference type="FunCoup" id="Q3SZL5">
    <property type="interactions" value="3624"/>
</dbReference>
<dbReference type="STRING" id="9913.ENSBTAP00000017414"/>
<dbReference type="GlyCosmos" id="Q3SZL5">
    <property type="glycosylation" value="2 sites, No reported glycans"/>
</dbReference>
<dbReference type="GlyGen" id="Q3SZL5">
    <property type="glycosylation" value="2 sites"/>
</dbReference>
<dbReference type="PaxDb" id="9913-ENSBTAP00000017414"/>
<dbReference type="GeneID" id="504583"/>
<dbReference type="KEGG" id="bta:504583"/>
<dbReference type="CTD" id="94005"/>
<dbReference type="eggNOG" id="KOG2459">
    <property type="taxonomic scope" value="Eukaryota"/>
</dbReference>
<dbReference type="InParanoid" id="Q3SZL5"/>
<dbReference type="OrthoDB" id="28748at2759"/>
<dbReference type="UniPathway" id="UPA00196"/>
<dbReference type="Proteomes" id="UP000009136">
    <property type="component" value="Unplaced"/>
</dbReference>
<dbReference type="GO" id="GO:0042765">
    <property type="term" value="C:GPI-anchor transamidase complex"/>
    <property type="evidence" value="ECO:0000250"/>
    <property type="project" value="UniProtKB"/>
</dbReference>
<dbReference type="GO" id="GO:0016255">
    <property type="term" value="P:attachment of GPI anchor to protein"/>
    <property type="evidence" value="ECO:0000250"/>
    <property type="project" value="UniProtKB"/>
</dbReference>
<dbReference type="GO" id="GO:0006506">
    <property type="term" value="P:GPI anchor biosynthetic process"/>
    <property type="evidence" value="ECO:0007669"/>
    <property type="project" value="UniProtKB-UniPathway"/>
</dbReference>
<dbReference type="InterPro" id="IPR019540">
    <property type="entry name" value="PtdIno-glycan_biosynth_class_S"/>
</dbReference>
<dbReference type="PANTHER" id="PTHR21072">
    <property type="entry name" value="GPI TRANSAMIDASE COMPONENT PIG-S"/>
    <property type="match status" value="1"/>
</dbReference>
<dbReference type="PANTHER" id="PTHR21072:SF13">
    <property type="entry name" value="GPI TRANSAMIDASE COMPONENT PIG-S"/>
    <property type="match status" value="1"/>
</dbReference>
<dbReference type="Pfam" id="PF10510">
    <property type="entry name" value="PIG-S"/>
    <property type="match status" value="1"/>
</dbReference>
<accession>Q3SZL5</accession>
<gene>
    <name evidence="1" type="primary">PIGS</name>
</gene>
<comment type="function">
    <text evidence="1">Component of the glycosylphosphatidylinositol-anchor (GPI-anchor) transamidase (GPI-T) complex that catalyzes the formation of the linkage between a proprotein and a GPI-anchor and participates in GPI anchored protein biosynthesis.</text>
</comment>
<comment type="pathway">
    <text evidence="1">Glycolipid biosynthesis; glycosylphosphatidylinositol-anchor biosynthesis.</text>
</comment>
<comment type="subunit">
    <text evidence="1">Heteropentamer. Part of the GPI-anchor transamidase complex, consisting of PIGK, PIGT, PIGS, PIGU and GAA1.</text>
</comment>
<comment type="subcellular location">
    <subcellularLocation>
        <location evidence="1">Endoplasmic reticulum membrane</location>
        <topology evidence="1">Multi-pass membrane protein</topology>
    </subcellularLocation>
</comment>
<comment type="similarity">
    <text evidence="3">Belongs to the PIGS family.</text>
</comment>